<accession>A5TYA9</accession>
<keyword id="KW-1185">Reference proteome</keyword>
<sequence>MVAPHEDPEDHVAPAAQRVRAGTLLLANTDLLEPTFRRSVIYIVEHNDGGTLGVVLNRPSETAVYNVLPQWAKLAAKPKTMFIGGPVKRDAALCLAVLRVGADPEGVPGLRHVAGRLVMVDLDADPEVLAAAVEGVRIYAGYSGWTIGQLEGEIERDDWIVLSALPSDVLVGPRADLWGQVLRRQPLPLSLLATHPIDLSRN</sequence>
<dbReference type="EMBL" id="CP000611">
    <property type="protein sequence ID" value="ABQ71759.1"/>
    <property type="molecule type" value="Genomic_DNA"/>
</dbReference>
<dbReference type="RefSeq" id="WP_003400460.1">
    <property type="nucleotide sequence ID" value="NZ_CP016972.1"/>
</dbReference>
<dbReference type="SMR" id="A5TYA9"/>
<dbReference type="KEGG" id="mra:MRA_0041"/>
<dbReference type="eggNOG" id="COG1678">
    <property type="taxonomic scope" value="Bacteria"/>
</dbReference>
<dbReference type="HOGENOM" id="CLU_057596_2_0_11"/>
<dbReference type="Proteomes" id="UP000001988">
    <property type="component" value="Chromosome"/>
</dbReference>
<dbReference type="GO" id="GO:0005829">
    <property type="term" value="C:cytosol"/>
    <property type="evidence" value="ECO:0007669"/>
    <property type="project" value="TreeGrafter"/>
</dbReference>
<dbReference type="FunFam" id="3.40.1740.10:FF:000002">
    <property type="entry name" value="UPF0301 protein A5636_14805"/>
    <property type="match status" value="1"/>
</dbReference>
<dbReference type="Gene3D" id="3.40.1740.10">
    <property type="entry name" value="VC0467-like"/>
    <property type="match status" value="1"/>
</dbReference>
<dbReference type="HAMAP" id="MF_00758">
    <property type="entry name" value="UPF0301"/>
    <property type="match status" value="1"/>
</dbReference>
<dbReference type="InterPro" id="IPR003774">
    <property type="entry name" value="AlgH-like"/>
</dbReference>
<dbReference type="NCBIfam" id="NF001269">
    <property type="entry name" value="PRK00228.2-1"/>
    <property type="match status" value="1"/>
</dbReference>
<dbReference type="NCBIfam" id="NF001272">
    <property type="entry name" value="PRK00228.2-4"/>
    <property type="match status" value="1"/>
</dbReference>
<dbReference type="PANTHER" id="PTHR30327">
    <property type="entry name" value="UNCHARACTERIZED PROTEIN YQGE"/>
    <property type="match status" value="1"/>
</dbReference>
<dbReference type="PANTHER" id="PTHR30327:SF1">
    <property type="entry name" value="UPF0301 PROTEIN YQGE"/>
    <property type="match status" value="1"/>
</dbReference>
<dbReference type="Pfam" id="PF02622">
    <property type="entry name" value="DUF179"/>
    <property type="match status" value="1"/>
</dbReference>
<dbReference type="SUPFAM" id="SSF143456">
    <property type="entry name" value="VC0467-like"/>
    <property type="match status" value="1"/>
</dbReference>
<organism>
    <name type="scientific">Mycobacterium tuberculosis (strain ATCC 25177 / H37Ra)</name>
    <dbReference type="NCBI Taxonomy" id="419947"/>
    <lineage>
        <taxon>Bacteria</taxon>
        <taxon>Bacillati</taxon>
        <taxon>Actinomycetota</taxon>
        <taxon>Actinomycetes</taxon>
        <taxon>Mycobacteriales</taxon>
        <taxon>Mycobacteriaceae</taxon>
        <taxon>Mycobacterium</taxon>
        <taxon>Mycobacterium tuberculosis complex</taxon>
    </lineage>
</organism>
<feature type="chain" id="PRO_1000046664" description="UPF0301 protein MRA_0041">
    <location>
        <begin position="1"/>
        <end position="202"/>
    </location>
</feature>
<protein>
    <recommendedName>
        <fullName evidence="1">UPF0301 protein MRA_0041</fullName>
    </recommendedName>
</protein>
<reference key="1">
    <citation type="journal article" date="2008" name="PLoS ONE">
        <title>Genetic basis of virulence attenuation revealed by comparative genomic analysis of Mycobacterium tuberculosis strain H37Ra versus H37Rv.</title>
        <authorList>
            <person name="Zheng H."/>
            <person name="Lu L."/>
            <person name="Wang B."/>
            <person name="Pu S."/>
            <person name="Zhang X."/>
            <person name="Zhu G."/>
            <person name="Shi W."/>
            <person name="Zhang L."/>
            <person name="Wang H."/>
            <person name="Wang S."/>
            <person name="Zhao G."/>
            <person name="Zhang Y."/>
        </authorList>
    </citation>
    <scope>NUCLEOTIDE SEQUENCE [LARGE SCALE GENOMIC DNA]</scope>
    <source>
        <strain>ATCC 25177 / H37Ra</strain>
    </source>
</reference>
<name>Y041_MYCTA</name>
<proteinExistence type="inferred from homology"/>
<evidence type="ECO:0000255" key="1">
    <source>
        <dbReference type="HAMAP-Rule" id="MF_00758"/>
    </source>
</evidence>
<gene>
    <name type="ordered locus">MRA_0041</name>
</gene>
<comment type="similarity">
    <text evidence="1">Belongs to the UPF0301 (AlgH) family.</text>
</comment>